<accession>P47305</accession>
<accession>Q49505</accession>
<protein>
    <recommendedName>
        <fullName evidence="1">SsrA-binding protein</fullName>
    </recommendedName>
    <alternativeName>
        <fullName evidence="1">Small protein B</fullName>
    </alternativeName>
</protein>
<gene>
    <name evidence="1" type="primary">smpB</name>
    <name type="ordered locus">MG059</name>
</gene>
<name>SSRP_MYCGE</name>
<dbReference type="EMBL" id="L43967">
    <property type="protein sequence ID" value="AAC71276.1"/>
    <property type="molecule type" value="Genomic_DNA"/>
</dbReference>
<dbReference type="EMBL" id="U01693">
    <property type="protein sequence ID" value="AAB01006.1"/>
    <property type="molecule type" value="Genomic_DNA"/>
</dbReference>
<dbReference type="PIR" id="E64206">
    <property type="entry name" value="E64206"/>
</dbReference>
<dbReference type="RefSeq" id="WP_009885724.1">
    <property type="nucleotide sequence ID" value="NC_000908.2"/>
</dbReference>
<dbReference type="SMR" id="P47305"/>
<dbReference type="FunCoup" id="P47305">
    <property type="interactions" value="112"/>
</dbReference>
<dbReference type="STRING" id="243273.MG_059"/>
<dbReference type="GeneID" id="88282176"/>
<dbReference type="KEGG" id="mge:MG_059"/>
<dbReference type="eggNOG" id="COG0691">
    <property type="taxonomic scope" value="Bacteria"/>
</dbReference>
<dbReference type="HOGENOM" id="CLU_108953_0_1_14"/>
<dbReference type="InParanoid" id="P47305"/>
<dbReference type="OrthoDB" id="9805462at2"/>
<dbReference type="BioCyc" id="MGEN243273:G1GJ2-62-MONOMER"/>
<dbReference type="Proteomes" id="UP000000807">
    <property type="component" value="Chromosome"/>
</dbReference>
<dbReference type="GO" id="GO:0005829">
    <property type="term" value="C:cytosol"/>
    <property type="evidence" value="ECO:0000318"/>
    <property type="project" value="GO_Central"/>
</dbReference>
<dbReference type="GO" id="GO:0003723">
    <property type="term" value="F:RNA binding"/>
    <property type="evidence" value="ECO:0000318"/>
    <property type="project" value="GO_Central"/>
</dbReference>
<dbReference type="GO" id="GO:0070929">
    <property type="term" value="P:trans-translation"/>
    <property type="evidence" value="ECO:0007669"/>
    <property type="project" value="UniProtKB-UniRule"/>
</dbReference>
<dbReference type="Gene3D" id="2.40.280.10">
    <property type="match status" value="1"/>
</dbReference>
<dbReference type="HAMAP" id="MF_00023">
    <property type="entry name" value="SmpB"/>
    <property type="match status" value="1"/>
</dbReference>
<dbReference type="InterPro" id="IPR023620">
    <property type="entry name" value="SmpB"/>
</dbReference>
<dbReference type="InterPro" id="IPR000037">
    <property type="entry name" value="SsrA-bd_prot"/>
</dbReference>
<dbReference type="InterPro" id="IPR020081">
    <property type="entry name" value="SsrA-bd_prot_CS"/>
</dbReference>
<dbReference type="NCBIfam" id="NF003843">
    <property type="entry name" value="PRK05422.1"/>
    <property type="match status" value="1"/>
</dbReference>
<dbReference type="NCBIfam" id="TIGR00086">
    <property type="entry name" value="smpB"/>
    <property type="match status" value="1"/>
</dbReference>
<dbReference type="PANTHER" id="PTHR30308:SF2">
    <property type="entry name" value="SSRA-BINDING PROTEIN"/>
    <property type="match status" value="1"/>
</dbReference>
<dbReference type="PANTHER" id="PTHR30308">
    <property type="entry name" value="TMRNA-BINDING COMPONENT OF TRANS-TRANSLATION TAGGING COMPLEX"/>
    <property type="match status" value="1"/>
</dbReference>
<dbReference type="Pfam" id="PF01668">
    <property type="entry name" value="SmpB"/>
    <property type="match status" value="1"/>
</dbReference>
<dbReference type="SUPFAM" id="SSF74982">
    <property type="entry name" value="Small protein B (SmpB)"/>
    <property type="match status" value="1"/>
</dbReference>
<dbReference type="PROSITE" id="PS01317">
    <property type="entry name" value="SSRP"/>
    <property type="match status" value="1"/>
</dbReference>
<reference key="1">
    <citation type="journal article" date="1995" name="Science">
        <title>The minimal gene complement of Mycoplasma genitalium.</title>
        <authorList>
            <person name="Fraser C.M."/>
            <person name="Gocayne J.D."/>
            <person name="White O."/>
            <person name="Adams M.D."/>
            <person name="Clayton R.A."/>
            <person name="Fleischmann R.D."/>
            <person name="Bult C.J."/>
            <person name="Kerlavage A.R."/>
            <person name="Sutton G.G."/>
            <person name="Kelley J.M."/>
            <person name="Fritchman J.L."/>
            <person name="Weidman J.F."/>
            <person name="Small K.V."/>
            <person name="Sandusky M."/>
            <person name="Fuhrmann J.L."/>
            <person name="Nguyen D.T."/>
            <person name="Utterback T.R."/>
            <person name="Saudek D.M."/>
            <person name="Phillips C.A."/>
            <person name="Merrick J.M."/>
            <person name="Tomb J.-F."/>
            <person name="Dougherty B.A."/>
            <person name="Bott K.F."/>
            <person name="Hu P.-C."/>
            <person name="Lucier T.S."/>
            <person name="Peterson S.N."/>
            <person name="Smith H.O."/>
            <person name="Hutchison C.A. III"/>
            <person name="Venter J.C."/>
        </authorList>
    </citation>
    <scope>NUCLEOTIDE SEQUENCE [LARGE SCALE GENOMIC DNA]</scope>
    <source>
        <strain>ATCC 33530 / DSM 19775 / NCTC 10195 / G37</strain>
    </source>
</reference>
<reference key="2">
    <citation type="journal article" date="1993" name="J. Bacteriol.">
        <title>A survey of the Mycoplasma genitalium genome by using random sequencing.</title>
        <authorList>
            <person name="Peterson S.N."/>
            <person name="Hu P.-C."/>
            <person name="Bott K.F."/>
            <person name="Hutchison C.A. III"/>
        </authorList>
    </citation>
    <scope>NUCLEOTIDE SEQUENCE [GENOMIC DNA] OF 83-145</scope>
    <source>
        <strain>ATCC 33530 / DSM 19775 / NCTC 10195 / G37</strain>
    </source>
</reference>
<reference key="3">
    <citation type="journal article" date="1999" name="Science">
        <title>Global transposon mutagenesis and a minimal Mycoplasma genome.</title>
        <authorList>
            <person name="Hutchison C.A."/>
            <person name="Peterson S.N."/>
            <person name="Gill S.R."/>
            <person name="Cline R.T."/>
            <person name="White O."/>
            <person name="Fraser C.M."/>
            <person name="Smith H.O."/>
            <person name="Venter J.C."/>
        </authorList>
    </citation>
    <scope>DISRUPTION PHENOTYPE</scope>
    <source>
        <strain>ATCC 33530 / DSM 19775 / NCTC 10195 / G37</strain>
    </source>
</reference>
<proteinExistence type="inferred from homology"/>
<organism>
    <name type="scientific">Mycoplasma genitalium (strain ATCC 33530 / DSM 19775 / NCTC 10195 / G37)</name>
    <name type="common">Mycoplasmoides genitalium</name>
    <dbReference type="NCBI Taxonomy" id="243273"/>
    <lineage>
        <taxon>Bacteria</taxon>
        <taxon>Bacillati</taxon>
        <taxon>Mycoplasmatota</taxon>
        <taxon>Mycoplasmoidales</taxon>
        <taxon>Mycoplasmoidaceae</taxon>
        <taxon>Mycoplasmoides</taxon>
    </lineage>
</organism>
<evidence type="ECO:0000255" key="1">
    <source>
        <dbReference type="HAMAP-Rule" id="MF_00023"/>
    </source>
</evidence>
<evidence type="ECO:0000269" key="2">
    <source>
    </source>
</evidence>
<evidence type="ECO:0000305" key="3"/>
<comment type="function">
    <text evidence="1">Required for rescue of stalled ribosomes mediated by trans-translation. Binds to transfer-messenger RNA (tmRNA), required for stable association of tmRNA with ribosomes. tmRNA and SmpB together mimic tRNA shape, replacing the anticodon stem-loop with SmpB. tmRNA is encoded by the ssrA gene; the 2 termini fold to resemble tRNA(Ala) and it encodes a 'tag peptide', a short internal open reading frame. During trans-translation Ala-aminoacylated tmRNA acts like a tRNA, entering the A-site of stalled ribosomes, displacing the stalled mRNA. The ribosome then switches to translate the ORF on the tmRNA; the nascent peptide is terminated with the 'tag peptide' encoded by the tmRNA and targeted for degradation. The ribosome is freed to recommence translation, which seems to be the essential function of trans-translation.</text>
</comment>
<comment type="subcellular location">
    <subcellularLocation>
        <location evidence="1">Cytoplasm</location>
    </subcellularLocation>
    <text evidence="1">The tmRNA-SmpB complex associates with stalled 70S ribosomes.</text>
</comment>
<comment type="disruption phenotype">
    <text evidence="2">Essential, it cannot be deleted.</text>
</comment>
<comment type="similarity">
    <text evidence="1">Belongs to the SmpB family.</text>
</comment>
<keyword id="KW-0963">Cytoplasm</keyword>
<keyword id="KW-1185">Reference proteome</keyword>
<keyword id="KW-0694">RNA-binding</keyword>
<sequence length="145" mass="16865">MLILVNNPKAKYDYHLMESYCAGIVLKGSEVKALSLGQGSLKEAYVFVKNNELFLEQFTIPPYSFAGPLNHASDRIKKLLLNKHEIKQIINKKQQQSLSVIPSKVFFRNGKIKVEIWLAKPKKKFDKRETIKKKTIRRELEAEYR</sequence>
<feature type="chain" id="PRO_0000102982" description="SsrA-binding protein">
    <location>
        <begin position="1"/>
        <end position="145"/>
    </location>
</feature>
<feature type="sequence conflict" description="In Ref. 2; AAB01006." evidence="3" ref="2">
    <original>KHE</original>
    <variation>NMK</variation>
    <location>
        <begin position="83"/>
        <end position="85"/>
    </location>
</feature>